<accession>B0CIQ7</accession>
<name>LSPA_BRUSI</name>
<comment type="function">
    <text evidence="1">This protein specifically catalyzes the removal of signal peptides from prolipoproteins.</text>
</comment>
<comment type="catalytic activity">
    <reaction evidence="1">
        <text>Release of signal peptides from bacterial membrane prolipoproteins. Hydrolyzes -Xaa-Yaa-Zaa-|-(S,diacylglyceryl)Cys-, in which Xaa is hydrophobic (preferably Leu), and Yaa (Ala or Ser) and Zaa (Gly or Ala) have small, neutral side chains.</text>
        <dbReference type="EC" id="3.4.23.36"/>
    </reaction>
</comment>
<comment type="pathway">
    <text evidence="1">Protein modification; lipoprotein biosynthesis (signal peptide cleavage).</text>
</comment>
<comment type="subcellular location">
    <subcellularLocation>
        <location evidence="1">Cell inner membrane</location>
        <topology evidence="1">Multi-pass membrane protein</topology>
    </subcellularLocation>
</comment>
<comment type="similarity">
    <text evidence="1">Belongs to the peptidase A8 family.</text>
</comment>
<protein>
    <recommendedName>
        <fullName evidence="1">Lipoprotein signal peptidase</fullName>
        <ecNumber evidence="1">3.4.23.36</ecNumber>
    </recommendedName>
    <alternativeName>
        <fullName evidence="1">Prolipoprotein signal peptidase</fullName>
    </alternativeName>
    <alternativeName>
        <fullName evidence="1">Signal peptidase II</fullName>
        <shortName evidence="1">SPase II</shortName>
    </alternativeName>
</protein>
<reference key="1">
    <citation type="submission" date="2007-12" db="EMBL/GenBank/DDBJ databases">
        <title>Brucella suis ATCC 23445 whole genome shotgun sequencing project.</title>
        <authorList>
            <person name="Setubal J.C."/>
            <person name="Bowns C."/>
            <person name="Boyle S."/>
            <person name="Crasta O.R."/>
            <person name="Czar M.J."/>
            <person name="Dharmanolla C."/>
            <person name="Gillespie J.J."/>
            <person name="Kenyon R.W."/>
            <person name="Lu J."/>
            <person name="Mane S."/>
            <person name="Mohapatra S."/>
            <person name="Nagrani S."/>
            <person name="Purkayastha A."/>
            <person name="Rajasimha H.K."/>
            <person name="Shallom J.M."/>
            <person name="Shallom S."/>
            <person name="Shukla M."/>
            <person name="Snyder E.E."/>
            <person name="Sobral B.W."/>
            <person name="Wattam A.R."/>
            <person name="Will R."/>
            <person name="Williams K."/>
            <person name="Yoo H."/>
            <person name="Bruce D."/>
            <person name="Detter C."/>
            <person name="Munk C."/>
            <person name="Brettin T.S."/>
        </authorList>
    </citation>
    <scope>NUCLEOTIDE SEQUENCE [LARGE SCALE GENOMIC DNA]</scope>
    <source>
        <strain>ATCC 23445 / NCTC 10510</strain>
    </source>
</reference>
<dbReference type="EC" id="3.4.23.36" evidence="1"/>
<dbReference type="EMBL" id="CP000911">
    <property type="protein sequence ID" value="ABY37253.1"/>
    <property type="molecule type" value="Genomic_DNA"/>
</dbReference>
<dbReference type="RefSeq" id="WP_002965397.1">
    <property type="nucleotide sequence ID" value="NC_010169.1"/>
</dbReference>
<dbReference type="SMR" id="B0CIQ7"/>
<dbReference type="GeneID" id="97534439"/>
<dbReference type="KEGG" id="bmt:BSUIS_A0150"/>
<dbReference type="HOGENOM" id="CLU_083252_4_3_5"/>
<dbReference type="UniPathway" id="UPA00665"/>
<dbReference type="Proteomes" id="UP000008545">
    <property type="component" value="Chromosome I"/>
</dbReference>
<dbReference type="GO" id="GO:0005886">
    <property type="term" value="C:plasma membrane"/>
    <property type="evidence" value="ECO:0007669"/>
    <property type="project" value="UniProtKB-SubCell"/>
</dbReference>
<dbReference type="GO" id="GO:0004190">
    <property type="term" value="F:aspartic-type endopeptidase activity"/>
    <property type="evidence" value="ECO:0007669"/>
    <property type="project" value="UniProtKB-UniRule"/>
</dbReference>
<dbReference type="GO" id="GO:0006508">
    <property type="term" value="P:proteolysis"/>
    <property type="evidence" value="ECO:0007669"/>
    <property type="project" value="UniProtKB-KW"/>
</dbReference>
<dbReference type="HAMAP" id="MF_00161">
    <property type="entry name" value="LspA"/>
    <property type="match status" value="1"/>
</dbReference>
<dbReference type="InterPro" id="IPR001872">
    <property type="entry name" value="Peptidase_A8"/>
</dbReference>
<dbReference type="NCBIfam" id="TIGR00077">
    <property type="entry name" value="lspA"/>
    <property type="match status" value="1"/>
</dbReference>
<dbReference type="PANTHER" id="PTHR33695">
    <property type="entry name" value="LIPOPROTEIN SIGNAL PEPTIDASE"/>
    <property type="match status" value="1"/>
</dbReference>
<dbReference type="PANTHER" id="PTHR33695:SF1">
    <property type="entry name" value="LIPOPROTEIN SIGNAL PEPTIDASE"/>
    <property type="match status" value="1"/>
</dbReference>
<dbReference type="Pfam" id="PF01252">
    <property type="entry name" value="Peptidase_A8"/>
    <property type="match status" value="1"/>
</dbReference>
<dbReference type="PRINTS" id="PR00781">
    <property type="entry name" value="LIPOSIGPTASE"/>
</dbReference>
<dbReference type="PROSITE" id="PS00855">
    <property type="entry name" value="SPASE_II"/>
    <property type="match status" value="1"/>
</dbReference>
<sequence length="160" mass="18230">MKRHAVWSSLFVVILAVLIDQGIKYLVESRMFYGQQIDLLPFLALFRTHNEGIAFSMLAWLHDGGLIAITLAVIAFVLYLWWTNAPERVFARYGFALVIGGAIGNLIDRVMHGYVVDYVLFHLPTWSFAVFNLADAFITIGAGLIILEEFLGWRRERISH</sequence>
<feature type="chain" id="PRO_1000076919" description="Lipoprotein signal peptidase">
    <location>
        <begin position="1"/>
        <end position="160"/>
    </location>
</feature>
<feature type="transmembrane region" description="Helical" evidence="1">
    <location>
        <begin position="6"/>
        <end position="26"/>
    </location>
</feature>
<feature type="transmembrane region" description="Helical" evidence="1">
    <location>
        <begin position="58"/>
        <end position="78"/>
    </location>
</feature>
<feature type="transmembrane region" description="Helical" evidence="1">
    <location>
        <begin position="95"/>
        <end position="115"/>
    </location>
</feature>
<feature type="transmembrane region" description="Helical" evidence="1">
    <location>
        <begin position="127"/>
        <end position="147"/>
    </location>
</feature>
<feature type="active site" evidence="1">
    <location>
        <position position="117"/>
    </location>
</feature>
<feature type="active site" evidence="1">
    <location>
        <position position="135"/>
    </location>
</feature>
<evidence type="ECO:0000255" key="1">
    <source>
        <dbReference type="HAMAP-Rule" id="MF_00161"/>
    </source>
</evidence>
<organism>
    <name type="scientific">Brucella suis (strain ATCC 23445 / NCTC 10510)</name>
    <dbReference type="NCBI Taxonomy" id="470137"/>
    <lineage>
        <taxon>Bacteria</taxon>
        <taxon>Pseudomonadati</taxon>
        <taxon>Pseudomonadota</taxon>
        <taxon>Alphaproteobacteria</taxon>
        <taxon>Hyphomicrobiales</taxon>
        <taxon>Brucellaceae</taxon>
        <taxon>Brucella/Ochrobactrum group</taxon>
        <taxon>Brucella</taxon>
    </lineage>
</organism>
<gene>
    <name evidence="1" type="primary">lspA</name>
    <name type="ordered locus">BSUIS_A0150</name>
</gene>
<keyword id="KW-0064">Aspartyl protease</keyword>
<keyword id="KW-0997">Cell inner membrane</keyword>
<keyword id="KW-1003">Cell membrane</keyword>
<keyword id="KW-0378">Hydrolase</keyword>
<keyword id="KW-0472">Membrane</keyword>
<keyword id="KW-0645">Protease</keyword>
<keyword id="KW-0812">Transmembrane</keyword>
<keyword id="KW-1133">Transmembrane helix</keyword>
<proteinExistence type="inferred from homology"/>